<evidence type="ECO:0000255" key="1">
    <source>
        <dbReference type="HAMAP-Rule" id="MF_01358"/>
    </source>
</evidence>
<evidence type="ECO:0000305" key="2"/>
<comment type="function">
    <text evidence="1">NDH shuttles electrons from NAD(P)H:plastoquinone, via FMN and iron-sulfur (Fe-S) centers, to quinones in the photosynthetic chain and possibly in a chloroplast respiratory chain. The immediate electron acceptor for the enzyme in this species is believed to be plastoquinone. Couples the redox reaction to proton translocation, and thus conserves the redox energy in a proton gradient.</text>
</comment>
<comment type="catalytic activity">
    <reaction evidence="1">
        <text>a plastoquinone + NADH + (n+1) H(+)(in) = a plastoquinol + NAD(+) + n H(+)(out)</text>
        <dbReference type="Rhea" id="RHEA:42608"/>
        <dbReference type="Rhea" id="RHEA-COMP:9561"/>
        <dbReference type="Rhea" id="RHEA-COMP:9562"/>
        <dbReference type="ChEBI" id="CHEBI:15378"/>
        <dbReference type="ChEBI" id="CHEBI:17757"/>
        <dbReference type="ChEBI" id="CHEBI:57540"/>
        <dbReference type="ChEBI" id="CHEBI:57945"/>
        <dbReference type="ChEBI" id="CHEBI:62192"/>
    </reaction>
</comment>
<comment type="catalytic activity">
    <reaction evidence="1">
        <text>a plastoquinone + NADPH + (n+1) H(+)(in) = a plastoquinol + NADP(+) + n H(+)(out)</text>
        <dbReference type="Rhea" id="RHEA:42612"/>
        <dbReference type="Rhea" id="RHEA-COMP:9561"/>
        <dbReference type="Rhea" id="RHEA-COMP:9562"/>
        <dbReference type="ChEBI" id="CHEBI:15378"/>
        <dbReference type="ChEBI" id="CHEBI:17757"/>
        <dbReference type="ChEBI" id="CHEBI:57783"/>
        <dbReference type="ChEBI" id="CHEBI:58349"/>
        <dbReference type="ChEBI" id="CHEBI:62192"/>
    </reaction>
</comment>
<comment type="subunit">
    <text evidence="1">NDH is composed of at least 16 different subunits, 5 of which are encoded in the nucleus.</text>
</comment>
<comment type="subcellular location">
    <subcellularLocation>
        <location evidence="1">Plastid</location>
        <location evidence="1">Chloroplast thylakoid membrane</location>
        <topology evidence="1">Peripheral membrane protein</topology>
        <orientation evidence="1">Stromal side</orientation>
    </subcellularLocation>
</comment>
<comment type="miscellaneous">
    <text>There is a 56 residue fragment from the N-terminus in a second position on the plastid genome (corresponds to PA164); it is not clear if this is transcribed.</text>
</comment>
<comment type="similarity">
    <text evidence="1">Belongs to the complex I 49 kDa subunit family.</text>
</comment>
<comment type="sequence caution" evidence="2">
    <conflict type="erroneous initiation">
        <sequence resource="EMBL-CDS" id="AAS46225"/>
    </conflict>
</comment>
<geneLocation type="chloroplast"/>
<protein>
    <recommendedName>
        <fullName evidence="1">NAD(P)H-quinone oxidoreductase subunit H, chloroplastic</fullName>
        <ecNumber evidence="1">7.1.1.-</ecNumber>
    </recommendedName>
    <alternativeName>
        <fullName>NAD(P)H dehydrogenase subunit H</fullName>
    </alternativeName>
    <alternativeName>
        <fullName evidence="1">NADH-plastoquinone oxidoreductase 49 kDa subunit</fullName>
    </alternativeName>
    <alternativeName>
        <fullName evidence="1">NADH-plastoquinone oxidoreductase subunit H</fullName>
    </alternativeName>
</protein>
<reference key="1">
    <citation type="journal article" date="2004" name="Plant Physiol.">
        <title>A comparison of rice chloroplast genomes.</title>
        <authorList>
            <person name="Tang J."/>
            <person name="Xia H."/>
            <person name="Cao M."/>
            <person name="Zhang X."/>
            <person name="Zeng W."/>
            <person name="Hu S."/>
            <person name="Tong W."/>
            <person name="Wang J."/>
            <person name="Wang J."/>
            <person name="Yu J."/>
            <person name="Yang H."/>
            <person name="Zhu L."/>
        </authorList>
    </citation>
    <scope>NUCLEOTIDE SEQUENCE [LARGE SCALE GENOMIC DNA]</scope>
    <source>
        <strain>cv. PA64s</strain>
    </source>
</reference>
<proteinExistence type="inferred from homology"/>
<name>NDHH_ORYSA</name>
<sequence>MSLPLTRKDLMIVNMGPQHPSMHGVLRLIVTLDGEDVIDCEPILGYLHRGMEKIAENRTIIQYLPYVTRWDYLATMFTEAITVNAPEFLENIQIPQRASYIRVIMLELSRIASHLLWLGPFMADLGAQTPFFYIFRERELIYDLFEAATGMRMMHNYFRIGGVAADLPYGWIDKCLDFCDYFLRGVIEYQQLITQNPIFLERVEGVGFISGEEAVNWGLSGPMLRASGIQWDLRKVDLYESYNQFDWKVQWQKEGDSLARYLVRIGEMRESIKIIQQAVEKIPGGPYENLEVRRFKKAKNSEWNDFEYRFLGKKPSPNFELSKQELYARVEAPKGELGIYLVGDDSLFPWRWKIRPPGFINLQILPQLVKKMKLADIMTILGSIDIIMGEVDR</sequence>
<gene>
    <name evidence="1" type="primary">ndhH</name>
    <name type="ORF">PA164</name>
    <name type="ORF">PA176</name>
</gene>
<accession>P0C335</accession>
<accession>P12132</accession>
<accession>Q32765</accession>
<accession>Q6QXW9</accession>
<accession>Q6QXX8</accession>
<accession>Q6QY32</accession>
<accession>Q6QY41</accession>
<dbReference type="EC" id="7.1.1.-" evidence="1"/>
<dbReference type="EMBL" id="AY522331">
    <property type="protein sequence ID" value="AAS46216.1"/>
    <property type="molecule type" value="Genomic_DNA"/>
</dbReference>
<dbReference type="EMBL" id="AY522331">
    <property type="protein sequence ID" value="AAS46225.1"/>
    <property type="status" value="ALT_INIT"/>
    <property type="molecule type" value="Genomic_DNA"/>
</dbReference>
<dbReference type="PIR" id="JQ0285">
    <property type="entry name" value="JQ0285"/>
</dbReference>
<dbReference type="RefSeq" id="NP_039440.1">
    <property type="nucleotide sequence ID" value="NC_001320.1"/>
</dbReference>
<dbReference type="RefSeq" id="YP_009305368.1">
    <property type="nucleotide sequence ID" value="NC_031333.1"/>
</dbReference>
<dbReference type="SMR" id="P0C335"/>
<dbReference type="GeneID" id="29141444"/>
<dbReference type="KEGG" id="osa:3131485"/>
<dbReference type="GO" id="GO:0009535">
    <property type="term" value="C:chloroplast thylakoid membrane"/>
    <property type="evidence" value="ECO:0007669"/>
    <property type="project" value="UniProtKB-SubCell"/>
</dbReference>
<dbReference type="GO" id="GO:0009536">
    <property type="term" value="C:plastid"/>
    <property type="evidence" value="ECO:0000305"/>
    <property type="project" value="Gramene"/>
</dbReference>
<dbReference type="GO" id="GO:0051287">
    <property type="term" value="F:NAD binding"/>
    <property type="evidence" value="ECO:0007669"/>
    <property type="project" value="InterPro"/>
</dbReference>
<dbReference type="GO" id="GO:0016655">
    <property type="term" value="F:oxidoreductase activity, acting on NAD(P)H, quinone or similar compound as acceptor"/>
    <property type="evidence" value="ECO:0007669"/>
    <property type="project" value="UniProtKB-UniRule"/>
</dbReference>
<dbReference type="GO" id="GO:0048038">
    <property type="term" value="F:quinone binding"/>
    <property type="evidence" value="ECO:0007669"/>
    <property type="project" value="UniProtKB-KW"/>
</dbReference>
<dbReference type="GO" id="GO:0019684">
    <property type="term" value="P:photosynthesis, light reaction"/>
    <property type="evidence" value="ECO:0007669"/>
    <property type="project" value="UniProtKB-UniRule"/>
</dbReference>
<dbReference type="Gene3D" id="1.10.645.10">
    <property type="entry name" value="Cytochrome-c3 Hydrogenase, chain B"/>
    <property type="match status" value="1"/>
</dbReference>
<dbReference type="HAMAP" id="MF_01358">
    <property type="entry name" value="NDH1_NuoD"/>
    <property type="match status" value="1"/>
</dbReference>
<dbReference type="InterPro" id="IPR001135">
    <property type="entry name" value="NADH_Q_OxRdtase_suD"/>
</dbReference>
<dbReference type="InterPro" id="IPR014029">
    <property type="entry name" value="NADH_UbQ_OxRdtase_49kDa_CS"/>
</dbReference>
<dbReference type="InterPro" id="IPR022885">
    <property type="entry name" value="NDH1_su_D/H"/>
</dbReference>
<dbReference type="InterPro" id="IPR029014">
    <property type="entry name" value="NiFe-Hase_large"/>
</dbReference>
<dbReference type="NCBIfam" id="NF004739">
    <property type="entry name" value="PRK06075.1"/>
    <property type="match status" value="1"/>
</dbReference>
<dbReference type="NCBIfam" id="NF005649">
    <property type="entry name" value="PRK07415.1"/>
    <property type="match status" value="1"/>
</dbReference>
<dbReference type="PANTHER" id="PTHR11993:SF10">
    <property type="entry name" value="NADH DEHYDROGENASE [UBIQUINONE] IRON-SULFUR PROTEIN 2, MITOCHONDRIAL"/>
    <property type="match status" value="1"/>
</dbReference>
<dbReference type="PANTHER" id="PTHR11993">
    <property type="entry name" value="NADH-UBIQUINONE OXIDOREDUCTASE 49 KDA SUBUNIT"/>
    <property type="match status" value="1"/>
</dbReference>
<dbReference type="Pfam" id="PF00346">
    <property type="entry name" value="Complex1_49kDa"/>
    <property type="match status" value="1"/>
</dbReference>
<dbReference type="SUPFAM" id="SSF56762">
    <property type="entry name" value="HydB/Nqo4-like"/>
    <property type="match status" value="1"/>
</dbReference>
<dbReference type="PROSITE" id="PS00535">
    <property type="entry name" value="COMPLEX1_49K"/>
    <property type="match status" value="1"/>
</dbReference>
<organism>
    <name type="scientific">Oryza sativa</name>
    <name type="common">Rice</name>
    <dbReference type="NCBI Taxonomy" id="4530"/>
    <lineage>
        <taxon>Eukaryota</taxon>
        <taxon>Viridiplantae</taxon>
        <taxon>Streptophyta</taxon>
        <taxon>Embryophyta</taxon>
        <taxon>Tracheophyta</taxon>
        <taxon>Spermatophyta</taxon>
        <taxon>Magnoliopsida</taxon>
        <taxon>Liliopsida</taxon>
        <taxon>Poales</taxon>
        <taxon>Poaceae</taxon>
        <taxon>BOP clade</taxon>
        <taxon>Oryzoideae</taxon>
        <taxon>Oryzeae</taxon>
        <taxon>Oryzinae</taxon>
        <taxon>Oryza</taxon>
    </lineage>
</organism>
<feature type="chain" id="PRO_0000118608" description="NAD(P)H-quinone oxidoreductase subunit H, chloroplastic">
    <location>
        <begin position="1"/>
        <end position="393"/>
    </location>
</feature>
<keyword id="KW-0150">Chloroplast</keyword>
<keyword id="KW-0472">Membrane</keyword>
<keyword id="KW-0520">NAD</keyword>
<keyword id="KW-0521">NADP</keyword>
<keyword id="KW-0934">Plastid</keyword>
<keyword id="KW-0618">Plastoquinone</keyword>
<keyword id="KW-0874">Quinone</keyword>
<keyword id="KW-0793">Thylakoid</keyword>
<keyword id="KW-1278">Translocase</keyword>
<keyword id="KW-0813">Transport</keyword>